<feature type="chain" id="PRO_0000368818" description="ATP synthase subunit b">
    <location>
        <begin position="1"/>
        <end position="184"/>
    </location>
</feature>
<feature type="transmembrane region" description="Helical" evidence="1">
    <location>
        <begin position="16"/>
        <end position="36"/>
    </location>
</feature>
<proteinExistence type="inferred from homology"/>
<comment type="function">
    <text evidence="1">F(1)F(0) ATP synthase produces ATP from ADP in the presence of a proton or sodium gradient. F-type ATPases consist of two structural domains, F(1) containing the extramembraneous catalytic core and F(0) containing the membrane proton channel, linked together by a central stalk and a peripheral stalk. During catalysis, ATP synthesis in the catalytic domain of F(1) is coupled via a rotary mechanism of the central stalk subunits to proton translocation.</text>
</comment>
<comment type="function">
    <text evidence="1">Component of the F(0) channel, it forms part of the peripheral stalk, linking F(1) to F(0).</text>
</comment>
<comment type="subunit">
    <text evidence="1">F-type ATPases have 2 components, F(1) - the catalytic core - and F(0) - the membrane proton channel. F(1) has five subunits: alpha(3), beta(3), gamma(1), delta(1), epsilon(1). F(0) has three main subunits: a(1), b(2) and c(10-14). The alpha and beta chains form an alternating ring which encloses part of the gamma chain. F(1) is attached to F(0) by a central stalk formed by the gamma and epsilon chains, while a peripheral stalk is formed by the delta and b chains.</text>
</comment>
<comment type="subcellular location">
    <subcellularLocation>
        <location evidence="1">Cell membrane</location>
        <topology evidence="1">Single-pass membrane protein</topology>
    </subcellularLocation>
</comment>
<comment type="similarity">
    <text evidence="1">Belongs to the ATPase B chain family.</text>
</comment>
<name>ATPF_STRCO</name>
<sequence>MSPMLQIAAEEMENPLIPPIPELVIGLIAFVIVFGFLAKKLLPNINKVLEERREAIEGGIEKAEAAQTEAQSVLEQYKAQLAEARHEAARLRQEAQEQGATLIAEMRAEGQRQREEIIAAGHAQIQADRKAAASALRQDVGKLATELAGKLVGESLEDHARQSRVIDRFLDELDDKATTAEATR</sequence>
<protein>
    <recommendedName>
        <fullName evidence="1">ATP synthase subunit b</fullName>
    </recommendedName>
    <alternativeName>
        <fullName evidence="1">ATP synthase F(0) sector subunit b</fullName>
    </alternativeName>
    <alternativeName>
        <fullName evidence="1">ATPase subunit I</fullName>
    </alternativeName>
    <alternativeName>
        <fullName evidence="1">F-type ATPase subunit b</fullName>
        <shortName evidence="1">F-ATPase subunit b</shortName>
    </alternativeName>
</protein>
<evidence type="ECO:0000255" key="1">
    <source>
        <dbReference type="HAMAP-Rule" id="MF_01398"/>
    </source>
</evidence>
<organism>
    <name type="scientific">Streptomyces coelicolor (strain ATCC BAA-471 / A3(2) / M145)</name>
    <dbReference type="NCBI Taxonomy" id="100226"/>
    <lineage>
        <taxon>Bacteria</taxon>
        <taxon>Bacillati</taxon>
        <taxon>Actinomycetota</taxon>
        <taxon>Actinomycetes</taxon>
        <taxon>Kitasatosporales</taxon>
        <taxon>Streptomycetaceae</taxon>
        <taxon>Streptomyces</taxon>
        <taxon>Streptomyces albidoflavus group</taxon>
    </lineage>
</organism>
<gene>
    <name evidence="1" type="primary">atpF</name>
    <name type="ordered locus">SCO5369</name>
    <name type="ORF">2SC6G5.13</name>
</gene>
<dbReference type="EMBL" id="AL939123">
    <property type="protein sequence ID" value="CAB94540.1"/>
    <property type="molecule type" value="Genomic_DNA"/>
</dbReference>
<dbReference type="RefSeq" id="NP_629508.1">
    <property type="nucleotide sequence ID" value="NC_003888.3"/>
</dbReference>
<dbReference type="RefSeq" id="WP_011030209.1">
    <property type="nucleotide sequence ID" value="NZ_VNID01000011.1"/>
</dbReference>
<dbReference type="SMR" id="Q9K4D7"/>
<dbReference type="FunCoup" id="Q9K4D7">
    <property type="interactions" value="48"/>
</dbReference>
<dbReference type="STRING" id="100226.gene:17763021"/>
<dbReference type="PaxDb" id="100226-SCO5369"/>
<dbReference type="KEGG" id="sco:SCO5369"/>
<dbReference type="PATRIC" id="fig|100226.15.peg.5449"/>
<dbReference type="eggNOG" id="COG0711">
    <property type="taxonomic scope" value="Bacteria"/>
</dbReference>
<dbReference type="HOGENOM" id="CLU_079215_5_2_11"/>
<dbReference type="InParanoid" id="Q9K4D7"/>
<dbReference type="OrthoDB" id="5243563at2"/>
<dbReference type="PhylomeDB" id="Q9K4D7"/>
<dbReference type="Proteomes" id="UP000001973">
    <property type="component" value="Chromosome"/>
</dbReference>
<dbReference type="GO" id="GO:0005886">
    <property type="term" value="C:plasma membrane"/>
    <property type="evidence" value="ECO:0007669"/>
    <property type="project" value="UniProtKB-SubCell"/>
</dbReference>
<dbReference type="GO" id="GO:0045259">
    <property type="term" value="C:proton-transporting ATP synthase complex"/>
    <property type="evidence" value="ECO:0007669"/>
    <property type="project" value="UniProtKB-KW"/>
</dbReference>
<dbReference type="GO" id="GO:0046933">
    <property type="term" value="F:proton-transporting ATP synthase activity, rotational mechanism"/>
    <property type="evidence" value="ECO:0007669"/>
    <property type="project" value="UniProtKB-UniRule"/>
</dbReference>
<dbReference type="CDD" id="cd06503">
    <property type="entry name" value="ATP-synt_Fo_b"/>
    <property type="match status" value="1"/>
</dbReference>
<dbReference type="FunFam" id="1.20.5.620:FF:000002">
    <property type="entry name" value="ATP synthase subunit b"/>
    <property type="match status" value="1"/>
</dbReference>
<dbReference type="Gene3D" id="1.20.5.620">
    <property type="entry name" value="F1F0 ATP synthase subunit B, membrane domain"/>
    <property type="match status" value="1"/>
</dbReference>
<dbReference type="HAMAP" id="MF_01398">
    <property type="entry name" value="ATP_synth_b_bprime"/>
    <property type="match status" value="1"/>
</dbReference>
<dbReference type="InterPro" id="IPR028987">
    <property type="entry name" value="ATP_synth_B-like_membr_sf"/>
</dbReference>
<dbReference type="InterPro" id="IPR002146">
    <property type="entry name" value="ATP_synth_b/b'su_bac/chlpt"/>
</dbReference>
<dbReference type="InterPro" id="IPR005864">
    <property type="entry name" value="ATP_synth_F0_bsu_bac"/>
</dbReference>
<dbReference type="InterPro" id="IPR050059">
    <property type="entry name" value="ATP_synthase_B_chain"/>
</dbReference>
<dbReference type="NCBIfam" id="TIGR01144">
    <property type="entry name" value="ATP_synt_b"/>
    <property type="match status" value="1"/>
</dbReference>
<dbReference type="NCBIfam" id="NF004412">
    <property type="entry name" value="PRK05759.1-3"/>
    <property type="match status" value="1"/>
</dbReference>
<dbReference type="PANTHER" id="PTHR33445:SF1">
    <property type="entry name" value="ATP SYNTHASE SUBUNIT B"/>
    <property type="match status" value="1"/>
</dbReference>
<dbReference type="PANTHER" id="PTHR33445">
    <property type="entry name" value="ATP SYNTHASE SUBUNIT B', CHLOROPLASTIC"/>
    <property type="match status" value="1"/>
</dbReference>
<dbReference type="Pfam" id="PF00430">
    <property type="entry name" value="ATP-synt_B"/>
    <property type="match status" value="1"/>
</dbReference>
<dbReference type="SUPFAM" id="SSF81573">
    <property type="entry name" value="F1F0 ATP synthase subunit B, membrane domain"/>
    <property type="match status" value="1"/>
</dbReference>
<keyword id="KW-0066">ATP synthesis</keyword>
<keyword id="KW-1003">Cell membrane</keyword>
<keyword id="KW-0138">CF(0)</keyword>
<keyword id="KW-0375">Hydrogen ion transport</keyword>
<keyword id="KW-0406">Ion transport</keyword>
<keyword id="KW-0472">Membrane</keyword>
<keyword id="KW-1185">Reference proteome</keyword>
<keyword id="KW-0812">Transmembrane</keyword>
<keyword id="KW-1133">Transmembrane helix</keyword>
<keyword id="KW-0813">Transport</keyword>
<reference key="1">
    <citation type="journal article" date="2002" name="Nature">
        <title>Complete genome sequence of the model actinomycete Streptomyces coelicolor A3(2).</title>
        <authorList>
            <person name="Bentley S.D."/>
            <person name="Chater K.F."/>
            <person name="Cerdeno-Tarraga A.-M."/>
            <person name="Challis G.L."/>
            <person name="Thomson N.R."/>
            <person name="James K.D."/>
            <person name="Harris D.E."/>
            <person name="Quail M.A."/>
            <person name="Kieser H."/>
            <person name="Harper D."/>
            <person name="Bateman A."/>
            <person name="Brown S."/>
            <person name="Chandra G."/>
            <person name="Chen C.W."/>
            <person name="Collins M."/>
            <person name="Cronin A."/>
            <person name="Fraser A."/>
            <person name="Goble A."/>
            <person name="Hidalgo J."/>
            <person name="Hornsby T."/>
            <person name="Howarth S."/>
            <person name="Huang C.-H."/>
            <person name="Kieser T."/>
            <person name="Larke L."/>
            <person name="Murphy L.D."/>
            <person name="Oliver K."/>
            <person name="O'Neil S."/>
            <person name="Rabbinowitsch E."/>
            <person name="Rajandream M.A."/>
            <person name="Rutherford K.M."/>
            <person name="Rutter S."/>
            <person name="Seeger K."/>
            <person name="Saunders D."/>
            <person name="Sharp S."/>
            <person name="Squares R."/>
            <person name="Squares S."/>
            <person name="Taylor K."/>
            <person name="Warren T."/>
            <person name="Wietzorrek A."/>
            <person name="Woodward J.R."/>
            <person name="Barrell B.G."/>
            <person name="Parkhill J."/>
            <person name="Hopwood D.A."/>
        </authorList>
    </citation>
    <scope>NUCLEOTIDE SEQUENCE [LARGE SCALE GENOMIC DNA]</scope>
    <source>
        <strain>ATCC BAA-471 / A3(2) / M145</strain>
    </source>
</reference>
<accession>Q9K4D7</accession>